<reference key="1">
    <citation type="journal article" date="2006" name="Proc. Natl. Acad. Sci. U.S.A.">
        <title>Molecular genetic anatomy of inter- and intraserotype variation in the human bacterial pathogen group A Streptococcus.</title>
        <authorList>
            <person name="Beres S.B."/>
            <person name="Richter E.W."/>
            <person name="Nagiec M.J."/>
            <person name="Sumby P."/>
            <person name="Porcella S.F."/>
            <person name="DeLeo F.R."/>
            <person name="Musser J.M."/>
        </authorList>
    </citation>
    <scope>NUCLEOTIDE SEQUENCE [LARGE SCALE GENOMIC DNA]</scope>
    <source>
        <strain>MGAS10270</strain>
    </source>
</reference>
<feature type="chain" id="PRO_0000292797" description="UPF0346 protein MGAS10270_Spy0384">
    <location>
        <begin position="1"/>
        <end position="71"/>
    </location>
</feature>
<comment type="similarity">
    <text evidence="1">Belongs to the UPF0346 family.</text>
</comment>
<comment type="sequence caution" evidence="2">
    <conflict type="erroneous initiation">
        <sequence resource="EMBL-CDS" id="ABF33449"/>
    </conflict>
</comment>
<name>Y384_STRPD</name>
<proteinExistence type="inferred from homology"/>
<protein>
    <recommendedName>
        <fullName evidence="1">UPF0346 protein MGAS10270_Spy0384</fullName>
    </recommendedName>
</protein>
<dbReference type="EMBL" id="CP000260">
    <property type="protein sequence ID" value="ABF33449.1"/>
    <property type="status" value="ALT_INIT"/>
    <property type="molecule type" value="Genomic_DNA"/>
</dbReference>
<dbReference type="RefSeq" id="WP_002985757.1">
    <property type="nucleotide sequence ID" value="NZ_CVUH01000002.1"/>
</dbReference>
<dbReference type="SMR" id="Q1JI74"/>
<dbReference type="KEGG" id="sph:MGAS10270_Spy0384"/>
<dbReference type="HOGENOM" id="CLU_177534_1_0_9"/>
<dbReference type="Proteomes" id="UP000002436">
    <property type="component" value="Chromosome"/>
</dbReference>
<dbReference type="Gene3D" id="1.10.150.260">
    <property type="entry name" value="YozE SAM-like"/>
    <property type="match status" value="1"/>
</dbReference>
<dbReference type="HAMAP" id="MF_01538">
    <property type="entry name" value="UPF0346"/>
    <property type="match status" value="1"/>
</dbReference>
<dbReference type="InterPro" id="IPR010673">
    <property type="entry name" value="UPF0346"/>
</dbReference>
<dbReference type="InterPro" id="IPR023089">
    <property type="entry name" value="YozE_SAM-like"/>
</dbReference>
<dbReference type="InterPro" id="IPR036806">
    <property type="entry name" value="YozE_SAM-like_sf"/>
</dbReference>
<dbReference type="NCBIfam" id="NF010193">
    <property type="entry name" value="PRK13672.1"/>
    <property type="match status" value="1"/>
</dbReference>
<dbReference type="Pfam" id="PF06855">
    <property type="entry name" value="YozE_SAM_like"/>
    <property type="match status" value="1"/>
</dbReference>
<dbReference type="PIRSF" id="PIRSF037262">
    <property type="entry name" value="UCP037262"/>
    <property type="match status" value="1"/>
</dbReference>
<dbReference type="SUPFAM" id="SSF140652">
    <property type="entry name" value="YozE-like"/>
    <property type="match status" value="1"/>
</dbReference>
<evidence type="ECO:0000255" key="1">
    <source>
        <dbReference type="HAMAP-Rule" id="MF_01538"/>
    </source>
</evidence>
<evidence type="ECO:0000305" key="2"/>
<sequence length="71" mass="8481">MRKSFYSWLMTQRNPKSNEPVAILADLVFDDTTFPKHTNDFELISRYLEDQASFSFNLGQFDEIWEDYLAH</sequence>
<organism>
    <name type="scientific">Streptococcus pyogenes serotype M2 (strain MGAS10270)</name>
    <dbReference type="NCBI Taxonomy" id="370552"/>
    <lineage>
        <taxon>Bacteria</taxon>
        <taxon>Bacillati</taxon>
        <taxon>Bacillota</taxon>
        <taxon>Bacilli</taxon>
        <taxon>Lactobacillales</taxon>
        <taxon>Streptococcaceae</taxon>
        <taxon>Streptococcus</taxon>
    </lineage>
</organism>
<accession>Q1JI74</accession>
<gene>
    <name type="ordered locus">MGAS10270_Spy0384</name>
</gene>